<keyword id="KW-0285">Flavoprotein</keyword>
<keyword id="KW-0288">FMN</keyword>
<keyword id="KW-0520">NAD</keyword>
<keyword id="KW-0560">Oxidoreductase</keyword>
<accession>Q0T407</accession>
<proteinExistence type="inferred from homology"/>
<name>AZOR_SHIF8</name>
<dbReference type="EC" id="1.6.5.-" evidence="1"/>
<dbReference type="EC" id="1.7.1.17" evidence="1"/>
<dbReference type="EMBL" id="CP000266">
    <property type="protein sequence ID" value="ABF03958.1"/>
    <property type="molecule type" value="Genomic_DNA"/>
</dbReference>
<dbReference type="RefSeq" id="WP_000048979.1">
    <property type="nucleotide sequence ID" value="NC_008258.1"/>
</dbReference>
<dbReference type="SMR" id="Q0T407"/>
<dbReference type="KEGG" id="sfv:SFV_1795"/>
<dbReference type="HOGENOM" id="CLU_088964_0_0_6"/>
<dbReference type="Proteomes" id="UP000000659">
    <property type="component" value="Chromosome"/>
</dbReference>
<dbReference type="GO" id="GO:0009055">
    <property type="term" value="F:electron transfer activity"/>
    <property type="evidence" value="ECO:0007669"/>
    <property type="project" value="UniProtKB-UniRule"/>
</dbReference>
<dbReference type="GO" id="GO:0010181">
    <property type="term" value="F:FMN binding"/>
    <property type="evidence" value="ECO:0007669"/>
    <property type="project" value="UniProtKB-UniRule"/>
</dbReference>
<dbReference type="GO" id="GO:0016652">
    <property type="term" value="F:oxidoreductase activity, acting on NAD(P)H as acceptor"/>
    <property type="evidence" value="ECO:0007669"/>
    <property type="project" value="UniProtKB-UniRule"/>
</dbReference>
<dbReference type="GO" id="GO:0016655">
    <property type="term" value="F:oxidoreductase activity, acting on NAD(P)H, quinone or similar compound as acceptor"/>
    <property type="evidence" value="ECO:0007669"/>
    <property type="project" value="InterPro"/>
</dbReference>
<dbReference type="FunFam" id="3.40.50.360:FF:000010">
    <property type="entry name" value="FMN-dependent NADH-azoreductase"/>
    <property type="match status" value="1"/>
</dbReference>
<dbReference type="Gene3D" id="3.40.50.360">
    <property type="match status" value="1"/>
</dbReference>
<dbReference type="HAMAP" id="MF_01216">
    <property type="entry name" value="Azoreductase_type1"/>
    <property type="match status" value="1"/>
</dbReference>
<dbReference type="InterPro" id="IPR003680">
    <property type="entry name" value="Flavodoxin_fold"/>
</dbReference>
<dbReference type="InterPro" id="IPR029039">
    <property type="entry name" value="Flavoprotein-like_sf"/>
</dbReference>
<dbReference type="InterPro" id="IPR050104">
    <property type="entry name" value="FMN-dep_NADH:Q_OxRdtase_AzoR1"/>
</dbReference>
<dbReference type="InterPro" id="IPR023048">
    <property type="entry name" value="NADH:quinone_OxRdtase_FMN_depd"/>
</dbReference>
<dbReference type="PANTHER" id="PTHR43741">
    <property type="entry name" value="FMN-DEPENDENT NADH-AZOREDUCTASE 1"/>
    <property type="match status" value="1"/>
</dbReference>
<dbReference type="PANTHER" id="PTHR43741:SF2">
    <property type="entry name" value="FMN-DEPENDENT NADH:QUINONE OXIDOREDUCTASE"/>
    <property type="match status" value="1"/>
</dbReference>
<dbReference type="Pfam" id="PF02525">
    <property type="entry name" value="Flavodoxin_2"/>
    <property type="match status" value="1"/>
</dbReference>
<dbReference type="SUPFAM" id="SSF52218">
    <property type="entry name" value="Flavoproteins"/>
    <property type="match status" value="1"/>
</dbReference>
<gene>
    <name evidence="1" type="primary">azoR</name>
    <name type="ordered locus">SFV_1795</name>
</gene>
<reference key="1">
    <citation type="journal article" date="2006" name="BMC Genomics">
        <title>Complete genome sequence of Shigella flexneri 5b and comparison with Shigella flexneri 2a.</title>
        <authorList>
            <person name="Nie H."/>
            <person name="Yang F."/>
            <person name="Zhang X."/>
            <person name="Yang J."/>
            <person name="Chen L."/>
            <person name="Wang J."/>
            <person name="Xiong Z."/>
            <person name="Peng J."/>
            <person name="Sun L."/>
            <person name="Dong J."/>
            <person name="Xue Y."/>
            <person name="Xu X."/>
            <person name="Chen S."/>
            <person name="Yao Z."/>
            <person name="Shen Y."/>
            <person name="Jin Q."/>
        </authorList>
    </citation>
    <scope>NUCLEOTIDE SEQUENCE [LARGE SCALE GENOMIC DNA]</scope>
    <source>
        <strain>8401</strain>
    </source>
</reference>
<organism>
    <name type="scientific">Shigella flexneri serotype 5b (strain 8401)</name>
    <dbReference type="NCBI Taxonomy" id="373384"/>
    <lineage>
        <taxon>Bacteria</taxon>
        <taxon>Pseudomonadati</taxon>
        <taxon>Pseudomonadota</taxon>
        <taxon>Gammaproteobacteria</taxon>
        <taxon>Enterobacterales</taxon>
        <taxon>Enterobacteriaceae</taxon>
        <taxon>Shigella</taxon>
    </lineage>
</organism>
<sequence>MSKVLVLKSSILAGYSQSNQLSDYFVEQWSEKHSADEITVRDLAANPIPVLDGELVGALRPSDAPLTPRQQEALALSDELIAELKAHDVIVIAAPMYNFNISTQLKNYFDLVARAGVTFRYTENGPEGLVTGKKAIVITSRGGIHKDGPTDLVTPYLSTFLGFIGITDVKFVFAEGIAYGPEMAAKAQSDAKAAIDSIVAA</sequence>
<comment type="function">
    <text evidence="1">Quinone reductase that provides resistance to thiol-specific stress caused by electrophilic quinones.</text>
</comment>
<comment type="function">
    <text evidence="1">Also exhibits azoreductase activity. Catalyzes the reductive cleavage of the azo bond in aromatic azo compounds to the corresponding amines.</text>
</comment>
<comment type="catalytic activity">
    <reaction evidence="1">
        <text>2 a quinone + NADH + H(+) = 2 a 1,4-benzosemiquinone + NAD(+)</text>
        <dbReference type="Rhea" id="RHEA:65952"/>
        <dbReference type="ChEBI" id="CHEBI:15378"/>
        <dbReference type="ChEBI" id="CHEBI:57540"/>
        <dbReference type="ChEBI" id="CHEBI:57945"/>
        <dbReference type="ChEBI" id="CHEBI:132124"/>
        <dbReference type="ChEBI" id="CHEBI:134225"/>
    </reaction>
</comment>
<comment type="catalytic activity">
    <reaction evidence="1">
        <text>N,N-dimethyl-1,4-phenylenediamine + anthranilate + 2 NAD(+) = 2-(4-dimethylaminophenyl)diazenylbenzoate + 2 NADH + 2 H(+)</text>
        <dbReference type="Rhea" id="RHEA:55872"/>
        <dbReference type="ChEBI" id="CHEBI:15378"/>
        <dbReference type="ChEBI" id="CHEBI:15783"/>
        <dbReference type="ChEBI" id="CHEBI:16567"/>
        <dbReference type="ChEBI" id="CHEBI:57540"/>
        <dbReference type="ChEBI" id="CHEBI:57945"/>
        <dbReference type="ChEBI" id="CHEBI:71579"/>
        <dbReference type="EC" id="1.7.1.17"/>
    </reaction>
</comment>
<comment type="cofactor">
    <cofactor evidence="1">
        <name>FMN</name>
        <dbReference type="ChEBI" id="CHEBI:58210"/>
    </cofactor>
    <text evidence="1">Binds 1 FMN per subunit.</text>
</comment>
<comment type="subunit">
    <text evidence="1">Homodimer.</text>
</comment>
<comment type="similarity">
    <text evidence="1">Belongs to the azoreductase type 1 family.</text>
</comment>
<protein>
    <recommendedName>
        <fullName evidence="1">FMN-dependent NADH:quinone oxidoreductase</fullName>
        <ecNumber evidence="1">1.6.5.-</ecNumber>
    </recommendedName>
    <alternativeName>
        <fullName evidence="1">Azo-dye reductase</fullName>
    </alternativeName>
    <alternativeName>
        <fullName evidence="1">FMN-dependent NADH-azo compound oxidoreductase</fullName>
    </alternativeName>
    <alternativeName>
        <fullName evidence="1">FMN-dependent NADH-azoreductase</fullName>
        <ecNumber evidence="1">1.7.1.17</ecNumber>
    </alternativeName>
</protein>
<feature type="chain" id="PRO_1000066530" description="FMN-dependent NADH:quinone oxidoreductase">
    <location>
        <begin position="1"/>
        <end position="201"/>
    </location>
</feature>
<feature type="binding site" evidence="1">
    <location>
        <position position="10"/>
    </location>
    <ligand>
        <name>FMN</name>
        <dbReference type="ChEBI" id="CHEBI:58210"/>
    </ligand>
</feature>
<feature type="binding site" evidence="1">
    <location>
        <begin position="16"/>
        <end position="18"/>
    </location>
    <ligand>
        <name>FMN</name>
        <dbReference type="ChEBI" id="CHEBI:58210"/>
    </ligand>
</feature>
<feature type="binding site" evidence="1">
    <location>
        <begin position="96"/>
        <end position="99"/>
    </location>
    <ligand>
        <name>FMN</name>
        <dbReference type="ChEBI" id="CHEBI:58210"/>
    </ligand>
</feature>
<feature type="binding site" evidence="1">
    <location>
        <begin position="140"/>
        <end position="143"/>
    </location>
    <ligand>
        <name>FMN</name>
        <dbReference type="ChEBI" id="CHEBI:58210"/>
    </ligand>
</feature>
<evidence type="ECO:0000255" key="1">
    <source>
        <dbReference type="HAMAP-Rule" id="MF_01216"/>
    </source>
</evidence>